<comment type="function">
    <text evidence="1">Causes loosening and extension of plant cell walls by disrupting non-covalent bonding between cellulose microfibrils and matrix glucans. No enzymatic activity has been found (By similarity).</text>
</comment>
<comment type="subcellular location">
    <subcellularLocation>
        <location>Secreted</location>
        <location>Cell wall</location>
    </subcellularLocation>
    <subcellularLocation>
        <location>Membrane</location>
        <topology>Peripheral membrane protein</topology>
    </subcellularLocation>
</comment>
<comment type="similarity">
    <text evidence="5">Belongs to the expansin family. Expansin A subfamily.</text>
</comment>
<comment type="sequence caution" evidence="5">
    <conflict type="erroneous initiation">
        <sequence resource="EMBL-CDS" id="BAB09384"/>
    </conflict>
    <text>Truncated N-terminus.</text>
</comment>
<comment type="online information" name="EXPANSIN homepage">
    <link uri="https://www.dept.psu.edu/biology/groups/expansins/index.htm"/>
</comment>
<proteinExistence type="inferred from homology"/>
<dbReference type="EMBL" id="AB010694">
    <property type="protein sequence ID" value="BAB09384.1"/>
    <property type="status" value="ALT_INIT"/>
    <property type="molecule type" value="Genomic_DNA"/>
</dbReference>
<dbReference type="EMBL" id="CP002688">
    <property type="protein sequence ID" value="AED94416.2"/>
    <property type="molecule type" value="Genomic_DNA"/>
</dbReference>
<dbReference type="RefSeq" id="NP_198745.2">
    <property type="nucleotide sequence ID" value="NM_123291.2"/>
</dbReference>
<dbReference type="SMR" id="Q9FL78"/>
<dbReference type="STRING" id="3702.Q9FL78"/>
<dbReference type="PaxDb" id="3702-AT5G39290.1"/>
<dbReference type="ProteomicsDB" id="222337"/>
<dbReference type="EnsemblPlants" id="AT5G39290.1">
    <property type="protein sequence ID" value="AT5G39290.1"/>
    <property type="gene ID" value="AT5G39290"/>
</dbReference>
<dbReference type="GeneID" id="833925"/>
<dbReference type="Gramene" id="AT5G39290.1">
    <property type="protein sequence ID" value="AT5G39290.1"/>
    <property type="gene ID" value="AT5G39290"/>
</dbReference>
<dbReference type="KEGG" id="ath:AT5G39290"/>
<dbReference type="Araport" id="AT5G39290"/>
<dbReference type="TAIR" id="AT5G39290">
    <property type="gene designation" value="EXP26"/>
</dbReference>
<dbReference type="eggNOG" id="ENOG502QQNJ">
    <property type="taxonomic scope" value="Eukaryota"/>
</dbReference>
<dbReference type="HOGENOM" id="CLU_027462_0_1_1"/>
<dbReference type="InParanoid" id="Q9FL78"/>
<dbReference type="OMA" id="FRRIRCA"/>
<dbReference type="PhylomeDB" id="Q9FL78"/>
<dbReference type="PRO" id="PR:Q9FL78"/>
<dbReference type="Proteomes" id="UP000006548">
    <property type="component" value="Chromosome 5"/>
</dbReference>
<dbReference type="ExpressionAtlas" id="Q9FL78">
    <property type="expression patterns" value="baseline"/>
</dbReference>
<dbReference type="GO" id="GO:0005576">
    <property type="term" value="C:extracellular region"/>
    <property type="evidence" value="ECO:0007669"/>
    <property type="project" value="UniProtKB-KW"/>
</dbReference>
<dbReference type="GO" id="GO:0016020">
    <property type="term" value="C:membrane"/>
    <property type="evidence" value="ECO:0007669"/>
    <property type="project" value="UniProtKB-SubCell"/>
</dbReference>
<dbReference type="GO" id="GO:0009653">
    <property type="term" value="P:anatomical structure morphogenesis"/>
    <property type="evidence" value="ECO:0007669"/>
    <property type="project" value="UniProtKB-ARBA"/>
</dbReference>
<dbReference type="GO" id="GO:0009828">
    <property type="term" value="P:plant-type cell wall loosening"/>
    <property type="evidence" value="ECO:0000250"/>
    <property type="project" value="UniProtKB"/>
</dbReference>
<dbReference type="CDD" id="cd22274">
    <property type="entry name" value="DPBB_EXPA_N"/>
    <property type="match status" value="1"/>
</dbReference>
<dbReference type="Gene3D" id="2.60.40.760">
    <property type="entry name" value="Expansin, cellulose-binding-like domain"/>
    <property type="match status" value="1"/>
</dbReference>
<dbReference type="Gene3D" id="2.40.40.10">
    <property type="entry name" value="RlpA-like domain"/>
    <property type="match status" value="1"/>
</dbReference>
<dbReference type="InterPro" id="IPR007118">
    <property type="entry name" value="Expan_Lol_pI"/>
</dbReference>
<dbReference type="InterPro" id="IPR002963">
    <property type="entry name" value="Expansin"/>
</dbReference>
<dbReference type="InterPro" id="IPR007112">
    <property type="entry name" value="Expansin/allergen_DPBB_dom"/>
</dbReference>
<dbReference type="InterPro" id="IPR007117">
    <property type="entry name" value="Expansin_CBD"/>
</dbReference>
<dbReference type="InterPro" id="IPR036749">
    <property type="entry name" value="Expansin_CBD_sf"/>
</dbReference>
<dbReference type="InterPro" id="IPR009009">
    <property type="entry name" value="RlpA-like_DPBB"/>
</dbReference>
<dbReference type="InterPro" id="IPR036908">
    <property type="entry name" value="RlpA-like_sf"/>
</dbReference>
<dbReference type="PANTHER" id="PTHR31867">
    <property type="entry name" value="EXPANSIN-A15"/>
    <property type="match status" value="1"/>
</dbReference>
<dbReference type="Pfam" id="PF03330">
    <property type="entry name" value="DPBB_1"/>
    <property type="match status" value="1"/>
</dbReference>
<dbReference type="Pfam" id="PF01357">
    <property type="entry name" value="Expansin_C"/>
    <property type="match status" value="1"/>
</dbReference>
<dbReference type="PRINTS" id="PR01226">
    <property type="entry name" value="EXPANSIN"/>
</dbReference>
<dbReference type="PRINTS" id="PR01225">
    <property type="entry name" value="EXPANSNFAMLY"/>
</dbReference>
<dbReference type="SMART" id="SM00837">
    <property type="entry name" value="DPBB_1"/>
    <property type="match status" value="1"/>
</dbReference>
<dbReference type="SUPFAM" id="SSF50685">
    <property type="entry name" value="Barwin-like endoglucanases"/>
    <property type="match status" value="1"/>
</dbReference>
<dbReference type="SUPFAM" id="SSF49590">
    <property type="entry name" value="PHL pollen allergen"/>
    <property type="match status" value="1"/>
</dbReference>
<dbReference type="PROSITE" id="PS50843">
    <property type="entry name" value="EXPANSIN_CBD"/>
    <property type="match status" value="1"/>
</dbReference>
<dbReference type="PROSITE" id="PS50842">
    <property type="entry name" value="EXPANSIN_EG45"/>
    <property type="match status" value="1"/>
</dbReference>
<sequence>MKLLEKMIYVEFLMIIMAMWVVPMSYGHGAMIGNAVEAPDVAEAPGINDPSKALDPNWYDARATFYGDIHGGDTQQGACGYGNLFRQGYGLATAALSTALFNDGYTCGACYEIMCTRDPQWCLPGSVKITATNFCPANYSKTTDLWCNPPQKHFDLSLAMFLKIAKYKAGVVPVRYRRIPCSKTGGVKFETKGNPYFLMVLIYNVGGAGDIKYVQVKENKTGWITMKKNWGQNWTTSTVLTGQGLSFRVTTTDGITKDFWNVMPKNWGFGQTFDGKINF</sequence>
<protein>
    <recommendedName>
        <fullName>Putative expansin-A26</fullName>
        <shortName>AtEXPA26</shortName>
    </recommendedName>
    <alternativeName>
        <fullName>Alpha-expansin-26</fullName>
        <shortName>At-EXP26</shortName>
        <shortName>AtEx26</shortName>
    </alternativeName>
    <alternativeName>
        <fullName>Ath-ExpAlpha-1.16</fullName>
    </alternativeName>
</protein>
<accession>Q9FL78</accession>
<accession>F4KD32</accession>
<keyword id="KW-0134">Cell wall</keyword>
<keyword id="KW-0961">Cell wall biogenesis/degradation</keyword>
<keyword id="KW-0472">Membrane</keyword>
<keyword id="KW-1185">Reference proteome</keyword>
<keyword id="KW-0964">Secreted</keyword>
<keyword id="KW-0732">Signal</keyword>
<name>EXP26_ARATH</name>
<feature type="signal peptide" evidence="2">
    <location>
        <begin position="1"/>
        <end position="27"/>
    </location>
</feature>
<feature type="chain" id="PRO_0000008706" description="Putative expansin-A26">
    <location>
        <begin position="28"/>
        <end position="279"/>
    </location>
</feature>
<feature type="domain" description="Expansin-like EG45" evidence="4">
    <location>
        <begin position="76"/>
        <end position="186"/>
    </location>
</feature>
<feature type="domain" description="Expansin-like CBD" evidence="3">
    <location>
        <begin position="196"/>
        <end position="275"/>
    </location>
</feature>
<organism>
    <name type="scientific">Arabidopsis thaliana</name>
    <name type="common">Mouse-ear cress</name>
    <dbReference type="NCBI Taxonomy" id="3702"/>
    <lineage>
        <taxon>Eukaryota</taxon>
        <taxon>Viridiplantae</taxon>
        <taxon>Streptophyta</taxon>
        <taxon>Embryophyta</taxon>
        <taxon>Tracheophyta</taxon>
        <taxon>Spermatophyta</taxon>
        <taxon>Magnoliopsida</taxon>
        <taxon>eudicotyledons</taxon>
        <taxon>Gunneridae</taxon>
        <taxon>Pentapetalae</taxon>
        <taxon>rosids</taxon>
        <taxon>malvids</taxon>
        <taxon>Brassicales</taxon>
        <taxon>Brassicaceae</taxon>
        <taxon>Camelineae</taxon>
        <taxon>Arabidopsis</taxon>
    </lineage>
</organism>
<evidence type="ECO:0000250" key="1"/>
<evidence type="ECO:0000255" key="2"/>
<evidence type="ECO:0000255" key="3">
    <source>
        <dbReference type="PROSITE-ProRule" id="PRU00078"/>
    </source>
</evidence>
<evidence type="ECO:0000255" key="4">
    <source>
        <dbReference type="PROSITE-ProRule" id="PRU00079"/>
    </source>
</evidence>
<evidence type="ECO:0000305" key="5"/>
<reference key="1">
    <citation type="journal article" date="1998" name="DNA Res.">
        <title>Structural analysis of Arabidopsis thaliana chromosome 5. V. Sequence features of the regions of 1,381,565 bp covered by twenty one physically assigned P1 and TAC clones.</title>
        <authorList>
            <person name="Kaneko T."/>
            <person name="Kotani H."/>
            <person name="Nakamura Y."/>
            <person name="Sato S."/>
            <person name="Asamizu E."/>
            <person name="Miyajima N."/>
            <person name="Tabata S."/>
        </authorList>
    </citation>
    <scope>NUCLEOTIDE SEQUENCE [LARGE SCALE GENOMIC DNA]</scope>
    <source>
        <strain>cv. Columbia</strain>
    </source>
</reference>
<reference key="2">
    <citation type="journal article" date="2017" name="Plant J.">
        <title>Araport11: a complete reannotation of the Arabidopsis thaliana reference genome.</title>
        <authorList>
            <person name="Cheng C.Y."/>
            <person name="Krishnakumar V."/>
            <person name="Chan A.P."/>
            <person name="Thibaud-Nissen F."/>
            <person name="Schobel S."/>
            <person name="Town C.D."/>
        </authorList>
    </citation>
    <scope>GENOME REANNOTATION</scope>
    <source>
        <strain>cv. Columbia</strain>
    </source>
</reference>
<reference key="3">
    <citation type="journal article" date="2004" name="Plant Mol. Biol.">
        <title>Nomenclature for members of the expansin superfamily of genes and proteins.</title>
        <authorList>
            <person name="Kende H."/>
            <person name="Bradford K.J."/>
            <person name="Brummell D.A."/>
            <person name="Cho H.-T."/>
            <person name="Cosgrove D.J."/>
            <person name="Fleming A.J."/>
            <person name="Gehring C."/>
            <person name="Lee Y."/>
            <person name="McQueen-Mason S.J."/>
            <person name="Rose J.K.C."/>
            <person name="Voesenek L.A.C."/>
        </authorList>
    </citation>
    <scope>NOMENCLATURE</scope>
</reference>
<gene>
    <name type="primary">EXPA26</name>
    <name type="synonym">EXP26</name>
    <name type="ordered locus">At5g39290</name>
    <name type="ORF">K3K3.20</name>
    <name type="ORF">K3K3_140</name>
</gene>